<keyword id="KW-0186">Copper</keyword>
<keyword id="KW-0187">Copper transport</keyword>
<keyword id="KW-0406">Ion transport</keyword>
<keyword id="KW-0472">Membrane</keyword>
<keyword id="KW-1185">Reference proteome</keyword>
<keyword id="KW-0812">Transmembrane</keyword>
<keyword id="KW-1133">Transmembrane helix</keyword>
<keyword id="KW-0813">Transport</keyword>
<keyword id="KW-0926">Vacuole</keyword>
<feature type="chain" id="PRO_0000195046" description="Copper transport protein CTR2">
    <location>
        <begin position="1"/>
        <end position="189"/>
    </location>
</feature>
<feature type="topological domain" description="Cytoplasmic" evidence="1">
    <location>
        <begin position="1"/>
        <end position="81"/>
    </location>
</feature>
<feature type="transmembrane region" description="Helical" evidence="1">
    <location>
        <begin position="82"/>
        <end position="102"/>
    </location>
</feature>
<feature type="topological domain" description="Vacuolar" evidence="1">
    <location>
        <begin position="103"/>
        <end position="142"/>
    </location>
</feature>
<feature type="transmembrane region" description="Helical" evidence="1">
    <location>
        <begin position="143"/>
        <end position="163"/>
    </location>
</feature>
<feature type="topological domain" description="Cytoplasmic" evidence="1">
    <location>
        <begin position="164"/>
        <end position="189"/>
    </location>
</feature>
<comment type="function">
    <text evidence="2">Provides bioavailable copper via mobilization of vacuolar copper stores and export to the cytoplasm.</text>
</comment>
<comment type="subunit">
    <text evidence="2">Homomultimer.</text>
</comment>
<comment type="subcellular location">
    <subcellularLocation>
        <location evidence="2">Vacuole membrane</location>
        <topology evidence="2">Multi-pass membrane protein</topology>
    </subcellularLocation>
</comment>
<comment type="similarity">
    <text evidence="3">Belongs to the copper transporter (Ctr) (TC 1.A.56) family. SLC31A subfamily.</text>
</comment>
<sequence length="189" mass="21651">MDDKKTWSTVTLRTFNQLVTSSLIGYSKKMDSMNHKMEGNAGHDHSDMHMGDGDDTCSMNMLFSWSYKNTCVVFEWWHIKTLPGLILSCLAIFGLAYLYEYLKYCVHKRQLSQRVLLPNRSLTKINQADKVSNSILYGLQVGFSFMLMLVFMTYNGWLMLAVVCGAIWGNYSWCTSYSPEIDDSSLACH</sequence>
<proteinExistence type="evidence at protein level"/>
<gene>
    <name type="primary">CTR2</name>
    <name type="ordered locus">YHR175W</name>
</gene>
<organism>
    <name type="scientific">Saccharomyces cerevisiae (strain ATCC 204508 / S288c)</name>
    <name type="common">Baker's yeast</name>
    <dbReference type="NCBI Taxonomy" id="559292"/>
    <lineage>
        <taxon>Eukaryota</taxon>
        <taxon>Fungi</taxon>
        <taxon>Dikarya</taxon>
        <taxon>Ascomycota</taxon>
        <taxon>Saccharomycotina</taxon>
        <taxon>Saccharomycetes</taxon>
        <taxon>Saccharomycetales</taxon>
        <taxon>Saccharomycetaceae</taxon>
        <taxon>Saccharomyces</taxon>
    </lineage>
</organism>
<evidence type="ECO:0000255" key="1"/>
<evidence type="ECO:0000269" key="2">
    <source>
    </source>
</evidence>
<evidence type="ECO:0000305" key="3"/>
<name>CTR2_YEAST</name>
<accession>P38865</accession>
<accession>D3DLC3</accession>
<reference key="1">
    <citation type="journal article" date="1994" name="Science">
        <title>Complete nucleotide sequence of Saccharomyces cerevisiae chromosome VIII.</title>
        <authorList>
            <person name="Johnston M."/>
            <person name="Andrews S."/>
            <person name="Brinkman R."/>
            <person name="Cooper J."/>
            <person name="Ding H."/>
            <person name="Dover J."/>
            <person name="Du Z."/>
            <person name="Favello A."/>
            <person name="Fulton L."/>
            <person name="Gattung S."/>
            <person name="Geisel C."/>
            <person name="Kirsten J."/>
            <person name="Kucaba T."/>
            <person name="Hillier L.W."/>
            <person name="Jier M."/>
            <person name="Johnston L."/>
            <person name="Langston Y."/>
            <person name="Latreille P."/>
            <person name="Louis E.J."/>
            <person name="Macri C."/>
            <person name="Mardis E."/>
            <person name="Menezes S."/>
            <person name="Mouser L."/>
            <person name="Nhan M."/>
            <person name="Rifkin L."/>
            <person name="Riles L."/>
            <person name="St Peter H."/>
            <person name="Trevaskis E."/>
            <person name="Vaughan K."/>
            <person name="Vignati D."/>
            <person name="Wilcox L."/>
            <person name="Wohldman P."/>
            <person name="Waterston R."/>
            <person name="Wilson R."/>
            <person name="Vaudin M."/>
        </authorList>
    </citation>
    <scope>NUCLEOTIDE SEQUENCE [LARGE SCALE GENOMIC DNA]</scope>
    <source>
        <strain>ATCC 204508 / S288c</strain>
    </source>
</reference>
<reference key="2">
    <citation type="journal article" date="2014" name="G3 (Bethesda)">
        <title>The reference genome sequence of Saccharomyces cerevisiae: Then and now.</title>
        <authorList>
            <person name="Engel S.R."/>
            <person name="Dietrich F.S."/>
            <person name="Fisk D.G."/>
            <person name="Binkley G."/>
            <person name="Balakrishnan R."/>
            <person name="Costanzo M.C."/>
            <person name="Dwight S.S."/>
            <person name="Hitz B.C."/>
            <person name="Karra K."/>
            <person name="Nash R.S."/>
            <person name="Weng S."/>
            <person name="Wong E.D."/>
            <person name="Lloyd P."/>
            <person name="Skrzypek M.S."/>
            <person name="Miyasato S.R."/>
            <person name="Simison M."/>
            <person name="Cherry J.M."/>
        </authorList>
    </citation>
    <scope>GENOME REANNOTATION</scope>
    <source>
        <strain>ATCC 204508 / S288c</strain>
    </source>
</reference>
<reference key="3">
    <citation type="journal article" date="1995" name="J. Biol. Chem.">
        <title>Molecular characterization of a putative Arabidopsis thaliana copper transporter and its yeast homologue.</title>
        <authorList>
            <person name="Kampfenkel K.K.K."/>
            <person name="Kushnir S."/>
            <person name="Babiychuk E."/>
            <person name="Inze D."/>
            <person name="Vanmontagu M."/>
        </authorList>
    </citation>
    <scope>POSSIBLE FUNCTION</scope>
</reference>
<reference key="4">
    <citation type="journal article" date="2004" name="J. Biol. Chem.">
        <title>Mobilization of intracellular copper stores by the ctr2 vacuolar copper transporter.</title>
        <authorList>
            <person name="Rees E.M."/>
            <person name="Lee J."/>
            <person name="Thiele D.J."/>
        </authorList>
    </citation>
    <scope>FUNCTION</scope>
    <scope>SUBUNIT</scope>
    <scope>SUBCELLULAR LOCATION</scope>
</reference>
<reference key="5">
    <citation type="journal article" date="2006" name="Proc. Natl. Acad. Sci. U.S.A.">
        <title>A global topology map of the Saccharomyces cerevisiae membrane proteome.</title>
        <authorList>
            <person name="Kim H."/>
            <person name="Melen K."/>
            <person name="Oesterberg M."/>
            <person name="von Heijne G."/>
        </authorList>
    </citation>
    <scope>TOPOLOGY [LARGE SCALE ANALYSIS]</scope>
    <source>
        <strain>ATCC 208353 / W303-1A</strain>
    </source>
</reference>
<dbReference type="EMBL" id="U00027">
    <property type="protein sequence ID" value="AAB68020.1"/>
    <property type="molecule type" value="Genomic_DNA"/>
</dbReference>
<dbReference type="EMBL" id="BK006934">
    <property type="protein sequence ID" value="DAA06867.1"/>
    <property type="molecule type" value="Genomic_DNA"/>
</dbReference>
<dbReference type="PIR" id="S48914">
    <property type="entry name" value="S48914"/>
</dbReference>
<dbReference type="RefSeq" id="NP_012045.3">
    <property type="nucleotide sequence ID" value="NM_001179306.3"/>
</dbReference>
<dbReference type="SMR" id="P38865"/>
<dbReference type="BioGRID" id="36608">
    <property type="interactions" value="39"/>
</dbReference>
<dbReference type="DIP" id="DIP-4763N"/>
<dbReference type="FunCoup" id="P38865">
    <property type="interactions" value="696"/>
</dbReference>
<dbReference type="IntAct" id="P38865">
    <property type="interactions" value="5"/>
</dbReference>
<dbReference type="MINT" id="P38865"/>
<dbReference type="STRING" id="4932.YHR175W"/>
<dbReference type="TCDB" id="1.A.56.1.3">
    <property type="family name" value="the copper transporter (ctr) family"/>
</dbReference>
<dbReference type="iPTMnet" id="P38865"/>
<dbReference type="PaxDb" id="4932-YHR175W"/>
<dbReference type="PeptideAtlas" id="P38865"/>
<dbReference type="EnsemblFungi" id="YHR175W_mRNA">
    <property type="protein sequence ID" value="YHR175W"/>
    <property type="gene ID" value="YHR175W"/>
</dbReference>
<dbReference type="GeneID" id="856580"/>
<dbReference type="KEGG" id="sce:YHR175W"/>
<dbReference type="AGR" id="SGD:S000001218"/>
<dbReference type="SGD" id="S000001218">
    <property type="gene designation" value="CTR2"/>
</dbReference>
<dbReference type="VEuPathDB" id="FungiDB:YHR175W"/>
<dbReference type="eggNOG" id="KOG3386">
    <property type="taxonomic scope" value="Eukaryota"/>
</dbReference>
<dbReference type="HOGENOM" id="CLU_079690_4_0_1"/>
<dbReference type="InParanoid" id="P38865"/>
<dbReference type="OMA" id="YWLCLAV"/>
<dbReference type="OrthoDB" id="161814at2759"/>
<dbReference type="BioCyc" id="YEAST:G3O-31208-MONOMER"/>
<dbReference type="Reactome" id="R-SCE-425410">
    <property type="pathway name" value="Metal ion SLC transporters"/>
</dbReference>
<dbReference type="BioGRID-ORCS" id="856580">
    <property type="hits" value="0 hits in 10 CRISPR screens"/>
</dbReference>
<dbReference type="PRO" id="PR:P38865"/>
<dbReference type="Proteomes" id="UP000002311">
    <property type="component" value="Chromosome VIII"/>
</dbReference>
<dbReference type="RNAct" id="P38865">
    <property type="molecule type" value="protein"/>
</dbReference>
<dbReference type="GO" id="GO:0005783">
    <property type="term" value="C:endoplasmic reticulum"/>
    <property type="evidence" value="ECO:0007005"/>
    <property type="project" value="SGD"/>
</dbReference>
<dbReference type="GO" id="GO:0000329">
    <property type="term" value="C:fungal-type vacuole membrane"/>
    <property type="evidence" value="ECO:0000314"/>
    <property type="project" value="SGD"/>
</dbReference>
<dbReference type="GO" id="GO:0005375">
    <property type="term" value="F:copper ion transmembrane transporter activity"/>
    <property type="evidence" value="ECO:0000315"/>
    <property type="project" value="SGD"/>
</dbReference>
<dbReference type="GO" id="GO:0015677">
    <property type="term" value="P:copper ion import"/>
    <property type="evidence" value="ECO:0000316"/>
    <property type="project" value="SGD"/>
</dbReference>
<dbReference type="GO" id="GO:0006825">
    <property type="term" value="P:copper ion transport"/>
    <property type="evidence" value="ECO:0000315"/>
    <property type="project" value="SGD"/>
</dbReference>
<dbReference type="GO" id="GO:0006878">
    <property type="term" value="P:intracellular copper ion homeostasis"/>
    <property type="evidence" value="ECO:0000315"/>
    <property type="project" value="SGD"/>
</dbReference>
<dbReference type="InterPro" id="IPR007274">
    <property type="entry name" value="Cop_transporter"/>
</dbReference>
<dbReference type="PANTHER" id="PTHR12483:SF115">
    <property type="entry name" value="COPPER TRANSPORT PROTEIN"/>
    <property type="match status" value="1"/>
</dbReference>
<dbReference type="PANTHER" id="PTHR12483">
    <property type="entry name" value="SOLUTE CARRIER FAMILY 31 COPPER TRANSPORTERS"/>
    <property type="match status" value="1"/>
</dbReference>
<dbReference type="Pfam" id="PF04145">
    <property type="entry name" value="Ctr"/>
    <property type="match status" value="2"/>
</dbReference>
<protein>
    <recommendedName>
        <fullName>Copper transport protein CTR2</fullName>
        <shortName>Copper transporter 2</shortName>
    </recommendedName>
</protein>